<reference key="1">
    <citation type="journal article" date="2001" name="Nature">
        <title>Complete genome sequence of Salmonella enterica serovar Typhimurium LT2.</title>
        <authorList>
            <person name="McClelland M."/>
            <person name="Sanderson K.E."/>
            <person name="Spieth J."/>
            <person name="Clifton S.W."/>
            <person name="Latreille P."/>
            <person name="Courtney L."/>
            <person name="Porwollik S."/>
            <person name="Ali J."/>
            <person name="Dante M."/>
            <person name="Du F."/>
            <person name="Hou S."/>
            <person name="Layman D."/>
            <person name="Leonard S."/>
            <person name="Nguyen C."/>
            <person name="Scott K."/>
            <person name="Holmes A."/>
            <person name="Grewal N."/>
            <person name="Mulvaney E."/>
            <person name="Ryan E."/>
            <person name="Sun H."/>
            <person name="Florea L."/>
            <person name="Miller W."/>
            <person name="Stoneking T."/>
            <person name="Nhan M."/>
            <person name="Waterston R."/>
            <person name="Wilson R.K."/>
        </authorList>
    </citation>
    <scope>NUCLEOTIDE SEQUENCE [LARGE SCALE GENOMIC DNA]</scope>
    <source>
        <strain>LT2 / SGSC1412 / ATCC 700720</strain>
    </source>
</reference>
<sequence length="438" mass="48393">MISLRHTALGLALSLAFTGQALAVTTIPFWHSMEGELGKEVDSLAQRFNQANPDYKIVPVYKGNYEQNLSAGIAAFRTGNAPAILQVYEVGTATMMASKAIKPVYEVFKDAGINFDESQFVPTVAGYYTDAKSGHLLSQPFNSSTPVLYYNKDAFKKAGLDPEQPPKTWQELADYTAKLRAAGMKCGYASGWQGWIQLENFSAWNGLPFASKNNGFDGTDAVLEFNKPEQVKHIALLEEMNKKGDFSYVGRKDESTEKFYNGDCAMTTASSGSLANIRQYAKFNYGVGMMPYDADIKGAPQNAIIGGASLWVMQGKDKETYTGVAKFLDFLAKPENAAEWHQKTGYLPITTAAYELTREQGYYDKNPGADIATRQMLNKPPLPFTKGLRLGNMPQIRTIVDEELESVWTGKKTPQQALDTAVDRGNQLLRRFEKASKS</sequence>
<comment type="function">
    <text evidence="1">Part of the ABC transporter complex UgpBAEC involved in sn-glycerol-3-phosphate (G3P) import. Binds G3P.</text>
</comment>
<comment type="subunit">
    <text evidence="1">The complex is composed of two ATP-binding proteins (UgpC), two transmembrane proteins (UgpA and UgpE) and a solute-binding protein (UgpB).</text>
</comment>
<comment type="subcellular location">
    <subcellularLocation>
        <location evidence="1">Periplasm</location>
    </subcellularLocation>
</comment>
<comment type="similarity">
    <text evidence="3">Belongs to the bacterial solute-binding protein 1 family.</text>
</comment>
<name>UGPB_SALTY</name>
<evidence type="ECO:0000250" key="1">
    <source>
        <dbReference type="UniProtKB" id="P0AG80"/>
    </source>
</evidence>
<evidence type="ECO:0000255" key="2"/>
<evidence type="ECO:0000305" key="3"/>
<protein>
    <recommendedName>
        <fullName evidence="1">sn-glycerol-3-phosphate-binding periplasmic protein UgpB</fullName>
    </recommendedName>
</protein>
<proteinExistence type="inferred from homology"/>
<organism>
    <name type="scientific">Salmonella typhimurium (strain LT2 / SGSC1412 / ATCC 700720)</name>
    <dbReference type="NCBI Taxonomy" id="99287"/>
    <lineage>
        <taxon>Bacteria</taxon>
        <taxon>Pseudomonadati</taxon>
        <taxon>Pseudomonadota</taxon>
        <taxon>Gammaproteobacteria</taxon>
        <taxon>Enterobacterales</taxon>
        <taxon>Enterobacteriaceae</taxon>
        <taxon>Salmonella</taxon>
    </lineage>
</organism>
<gene>
    <name type="primary">ugpB</name>
    <name type="ordered locus">STM3557</name>
</gene>
<dbReference type="EMBL" id="AE006468">
    <property type="protein sequence ID" value="AAL22417.1"/>
    <property type="molecule type" value="Genomic_DNA"/>
</dbReference>
<dbReference type="RefSeq" id="NP_462458.1">
    <property type="nucleotide sequence ID" value="NC_003197.2"/>
</dbReference>
<dbReference type="RefSeq" id="WP_000624747.1">
    <property type="nucleotide sequence ID" value="NC_003197.2"/>
</dbReference>
<dbReference type="SMR" id="Q7CPK0"/>
<dbReference type="STRING" id="99287.STM3557"/>
<dbReference type="PaxDb" id="99287-STM3557"/>
<dbReference type="GeneID" id="1255080"/>
<dbReference type="KEGG" id="stm:STM3557"/>
<dbReference type="PATRIC" id="fig|99287.12.peg.3760"/>
<dbReference type="HOGENOM" id="CLU_031285_3_0_6"/>
<dbReference type="OMA" id="EIQWWHS"/>
<dbReference type="PhylomeDB" id="Q7CPK0"/>
<dbReference type="BioCyc" id="SENT99287:STM3557-MONOMER"/>
<dbReference type="PHI-base" id="PHI:8131"/>
<dbReference type="Proteomes" id="UP000001014">
    <property type="component" value="Chromosome"/>
</dbReference>
<dbReference type="GO" id="GO:0030288">
    <property type="term" value="C:outer membrane-bounded periplasmic space"/>
    <property type="evidence" value="ECO:0007669"/>
    <property type="project" value="UniProtKB-ARBA"/>
</dbReference>
<dbReference type="GO" id="GO:0055085">
    <property type="term" value="P:transmembrane transport"/>
    <property type="evidence" value="ECO:0007669"/>
    <property type="project" value="InterPro"/>
</dbReference>
<dbReference type="CDD" id="cd14748">
    <property type="entry name" value="PBP2_UgpB"/>
    <property type="match status" value="1"/>
</dbReference>
<dbReference type="Gene3D" id="3.40.190.10">
    <property type="entry name" value="Periplasmic binding protein-like II"/>
    <property type="match status" value="2"/>
</dbReference>
<dbReference type="InterPro" id="IPR050490">
    <property type="entry name" value="Bact_solute-bd_prot1"/>
</dbReference>
<dbReference type="InterPro" id="IPR006059">
    <property type="entry name" value="SBP"/>
</dbReference>
<dbReference type="InterPro" id="IPR006061">
    <property type="entry name" value="SBP_1_CS"/>
</dbReference>
<dbReference type="NCBIfam" id="NF008211">
    <property type="entry name" value="PRK10974.1"/>
    <property type="match status" value="1"/>
</dbReference>
<dbReference type="PANTHER" id="PTHR43649">
    <property type="entry name" value="ARABINOSE-BINDING PROTEIN-RELATED"/>
    <property type="match status" value="1"/>
</dbReference>
<dbReference type="PANTHER" id="PTHR43649:SF31">
    <property type="entry name" value="SN-GLYCEROL-3-PHOSPHATE-BINDING PERIPLASMIC PROTEIN UGPB"/>
    <property type="match status" value="1"/>
</dbReference>
<dbReference type="Pfam" id="PF13416">
    <property type="entry name" value="SBP_bac_8"/>
    <property type="match status" value="1"/>
</dbReference>
<dbReference type="SUPFAM" id="SSF53850">
    <property type="entry name" value="Periplasmic binding protein-like II"/>
    <property type="match status" value="1"/>
</dbReference>
<dbReference type="PROSITE" id="PS01037">
    <property type="entry name" value="SBP_BACTERIAL_1"/>
    <property type="match status" value="1"/>
</dbReference>
<accession>Q7CPK0</accession>
<keyword id="KW-0574">Periplasm</keyword>
<keyword id="KW-1185">Reference proteome</keyword>
<keyword id="KW-0732">Signal</keyword>
<keyword id="KW-0813">Transport</keyword>
<feature type="signal peptide" evidence="2">
    <location>
        <begin position="1"/>
        <end position="23"/>
    </location>
</feature>
<feature type="chain" id="PRO_0000292816" description="sn-glycerol-3-phosphate-binding periplasmic protein UgpB">
    <location>
        <begin position="24"/>
        <end position="438"/>
    </location>
</feature>
<feature type="binding site" evidence="1">
    <location>
        <position position="65"/>
    </location>
    <ligand>
        <name>sn-glycerol 3-phosphate</name>
        <dbReference type="ChEBI" id="CHEBI:57597"/>
    </ligand>
</feature>
<feature type="binding site" evidence="1">
    <location>
        <position position="89"/>
    </location>
    <ligand>
        <name>sn-glycerol 3-phosphate</name>
        <dbReference type="ChEBI" id="CHEBI:57597"/>
    </ligand>
</feature>
<feature type="binding site" evidence="1">
    <location>
        <position position="144"/>
    </location>
    <ligand>
        <name>sn-glycerol 3-phosphate</name>
        <dbReference type="ChEBI" id="CHEBI:57597"/>
    </ligand>
</feature>
<feature type="binding site" evidence="1">
    <location>
        <position position="270"/>
    </location>
    <ligand>
        <name>sn-glycerol 3-phosphate</name>
        <dbReference type="ChEBI" id="CHEBI:57597"/>
    </ligand>
</feature>
<feature type="binding site" evidence="1">
    <location>
        <position position="307"/>
    </location>
    <ligand>
        <name>sn-glycerol 3-phosphate</name>
        <dbReference type="ChEBI" id="CHEBI:57597"/>
    </ligand>
</feature>
<feature type="binding site" evidence="1">
    <location>
        <position position="346"/>
    </location>
    <ligand>
        <name>sn-glycerol 3-phosphate</name>
        <dbReference type="ChEBI" id="CHEBI:57597"/>
    </ligand>
</feature>
<feature type="binding site" evidence="1">
    <location>
        <position position="397"/>
    </location>
    <ligand>
        <name>sn-glycerol 3-phosphate</name>
        <dbReference type="ChEBI" id="CHEBI:57597"/>
    </ligand>
</feature>